<reference key="1">
    <citation type="journal article" date="1998" name="DNA Res.">
        <title>Structural analysis of Arabidopsis thaliana chromosome 5. IV. Sequence features of the regions of 1,456,315 bp covered by nineteen physically assigned P1 and TAC clones.</title>
        <authorList>
            <person name="Sato S."/>
            <person name="Kaneko T."/>
            <person name="Kotani H."/>
            <person name="Nakamura Y."/>
            <person name="Asamizu E."/>
            <person name="Miyajima N."/>
            <person name="Tabata S."/>
        </authorList>
    </citation>
    <scope>NUCLEOTIDE SEQUENCE [LARGE SCALE GENOMIC DNA]</scope>
    <source>
        <strain>cv. Columbia</strain>
    </source>
</reference>
<reference key="2">
    <citation type="journal article" date="2000" name="Nature">
        <title>Sequence and analysis of chromosome 5 of the plant Arabidopsis thaliana.</title>
        <authorList>
            <person name="Tabata S."/>
            <person name="Kaneko T."/>
            <person name="Nakamura Y."/>
            <person name="Kotani H."/>
            <person name="Kato T."/>
            <person name="Asamizu E."/>
            <person name="Miyajima N."/>
            <person name="Sasamoto S."/>
            <person name="Kimura T."/>
            <person name="Hosouchi T."/>
            <person name="Kawashima K."/>
            <person name="Kohara M."/>
            <person name="Matsumoto M."/>
            <person name="Matsuno A."/>
            <person name="Muraki A."/>
            <person name="Nakayama S."/>
            <person name="Nakazaki N."/>
            <person name="Naruo K."/>
            <person name="Okumura S."/>
            <person name="Shinpo S."/>
            <person name="Takeuchi C."/>
            <person name="Wada T."/>
            <person name="Watanabe A."/>
            <person name="Yamada M."/>
            <person name="Yasuda M."/>
            <person name="Sato S."/>
            <person name="de la Bastide M."/>
            <person name="Huang E."/>
            <person name="Spiegel L."/>
            <person name="Gnoj L."/>
            <person name="O'Shaughnessy A."/>
            <person name="Preston R."/>
            <person name="Habermann K."/>
            <person name="Murray J."/>
            <person name="Johnson D."/>
            <person name="Rohlfing T."/>
            <person name="Nelson J."/>
            <person name="Stoneking T."/>
            <person name="Pepin K."/>
            <person name="Spieth J."/>
            <person name="Sekhon M."/>
            <person name="Armstrong J."/>
            <person name="Becker M."/>
            <person name="Belter E."/>
            <person name="Cordum H."/>
            <person name="Cordes M."/>
            <person name="Courtney L."/>
            <person name="Courtney W."/>
            <person name="Dante M."/>
            <person name="Du H."/>
            <person name="Edwards J."/>
            <person name="Fryman J."/>
            <person name="Haakensen B."/>
            <person name="Lamar E."/>
            <person name="Latreille P."/>
            <person name="Leonard S."/>
            <person name="Meyer R."/>
            <person name="Mulvaney E."/>
            <person name="Ozersky P."/>
            <person name="Riley A."/>
            <person name="Strowmatt C."/>
            <person name="Wagner-McPherson C."/>
            <person name="Wollam A."/>
            <person name="Yoakum M."/>
            <person name="Bell M."/>
            <person name="Dedhia N."/>
            <person name="Parnell L."/>
            <person name="Shah R."/>
            <person name="Rodriguez M."/>
            <person name="Hoon See L."/>
            <person name="Vil D."/>
            <person name="Baker J."/>
            <person name="Kirchoff K."/>
            <person name="Toth K."/>
            <person name="King L."/>
            <person name="Bahret A."/>
            <person name="Miller B."/>
            <person name="Marra M.A."/>
            <person name="Martienssen R."/>
            <person name="McCombie W.R."/>
            <person name="Wilson R.K."/>
            <person name="Murphy G."/>
            <person name="Bancroft I."/>
            <person name="Volckaert G."/>
            <person name="Wambutt R."/>
            <person name="Duesterhoeft A."/>
            <person name="Stiekema W."/>
            <person name="Pohl T."/>
            <person name="Entian K.-D."/>
            <person name="Terryn N."/>
            <person name="Hartley N."/>
            <person name="Bent E."/>
            <person name="Johnson S."/>
            <person name="Langham S.-A."/>
            <person name="McCullagh B."/>
            <person name="Robben J."/>
            <person name="Grymonprez B."/>
            <person name="Zimmermann W."/>
            <person name="Ramsperger U."/>
            <person name="Wedler H."/>
            <person name="Balke K."/>
            <person name="Wedler E."/>
            <person name="Peters S."/>
            <person name="van Staveren M."/>
            <person name="Dirkse W."/>
            <person name="Mooijman P."/>
            <person name="Klein Lankhorst R."/>
            <person name="Weitzenegger T."/>
            <person name="Bothe G."/>
            <person name="Rose M."/>
            <person name="Hauf J."/>
            <person name="Berneiser S."/>
            <person name="Hempel S."/>
            <person name="Feldpausch M."/>
            <person name="Lamberth S."/>
            <person name="Villarroel R."/>
            <person name="Gielen J."/>
            <person name="Ardiles W."/>
            <person name="Bents O."/>
            <person name="Lemcke K."/>
            <person name="Kolesov G."/>
            <person name="Mayer K.F.X."/>
            <person name="Rudd S."/>
            <person name="Schoof H."/>
            <person name="Schueller C."/>
            <person name="Zaccaria P."/>
            <person name="Mewes H.-W."/>
            <person name="Bevan M."/>
            <person name="Fransz P.F."/>
        </authorList>
    </citation>
    <scope>NUCLEOTIDE SEQUENCE [LARGE SCALE GENOMIC DNA]</scope>
    <source>
        <strain>cv. Columbia</strain>
    </source>
</reference>
<reference key="3">
    <citation type="journal article" date="2017" name="Plant J.">
        <title>Araport11: a complete reannotation of the Arabidopsis thaliana reference genome.</title>
        <authorList>
            <person name="Cheng C.Y."/>
            <person name="Krishnakumar V."/>
            <person name="Chan A.P."/>
            <person name="Thibaud-Nissen F."/>
            <person name="Schobel S."/>
            <person name="Town C.D."/>
        </authorList>
    </citation>
    <scope>GENOME REANNOTATION</scope>
    <source>
        <strain>cv. Columbia</strain>
    </source>
</reference>
<reference key="4">
    <citation type="journal article" date="2007" name="Plant Cell">
        <title>LITTLE NUCLEI genes affecting nuclear morphology in Arabidopsis thaliana.</title>
        <authorList>
            <person name="Dittmer T.A."/>
            <person name="Stacey N.J."/>
            <person name="Sugimoto-Shirasu K."/>
            <person name="Richards E.J."/>
        </authorList>
    </citation>
    <scope>GENE FAMILY</scope>
    <scope>NOMENCLATURE</scope>
    <source>
        <strain>cv. Columbia</strain>
    </source>
</reference>
<reference key="5">
    <citation type="journal article" date="2013" name="BMC Plant Biol.">
        <title>Arabidopsis CROWDED NUCLEI (CRWN) proteins are required for nuclear size control and heterochromatin organization.</title>
        <authorList>
            <person name="Wang H."/>
            <person name="Dittmer T.A."/>
            <person name="Richards E.J."/>
        </authorList>
    </citation>
    <scope>FUNCTION</scope>
    <scope>DISRUPTION PHENOTYPE</scope>
    <scope>GENE FAMILY</scope>
    <scope>NOMENCLATURE</scope>
    <source>
        <strain>cv. Columbia</strain>
    </source>
</reference>
<reference key="6">
    <citation type="journal article" date="2013" name="Plant Cell Physiol.">
        <title>LITTLE NUCLEI 1 and 4 regulate nuclear morphology in Arabidopsis thaliana.</title>
        <authorList>
            <person name="Sakamoto Y."/>
            <person name="Takagi S."/>
        </authorList>
    </citation>
    <scope>FUNCTION</scope>
    <scope>DISRUPTION PHENOTYPE</scope>
    <scope>SUBCELLULAR LOCATION</scope>
    <scope>TISSUE SPECIFICITY</scope>
    <scope>IDENTIFICATION BY MASS SPECTROMETRY</scope>
</reference>
<reference key="7">
    <citation type="journal article" date="2014" name="Plant Cell">
        <title>The novel nuclear envelope protein KAKU4 modulates nuclear morphology in Arabidopsis.</title>
        <authorList>
            <person name="Goto C."/>
            <person name="Tamura K."/>
            <person name="Fukao Y."/>
            <person name="Shimada T."/>
            <person name="Hara-Nishimura I."/>
        </authorList>
    </citation>
    <scope>INTERACTION WITH KAKU4</scope>
</reference>
<name>CRWN4_ARATH</name>
<protein>
    <recommendedName>
        <fullName evidence="10">Protein CROWDED NUCLEI 4</fullName>
    </recommendedName>
    <alternativeName>
        <fullName evidence="9">Protein LITTLE NUCLEI 4</fullName>
    </alternativeName>
</protein>
<organism>
    <name type="scientific">Arabidopsis thaliana</name>
    <name type="common">Mouse-ear cress</name>
    <dbReference type="NCBI Taxonomy" id="3702"/>
    <lineage>
        <taxon>Eukaryota</taxon>
        <taxon>Viridiplantae</taxon>
        <taxon>Streptophyta</taxon>
        <taxon>Embryophyta</taxon>
        <taxon>Tracheophyta</taxon>
        <taxon>Spermatophyta</taxon>
        <taxon>Magnoliopsida</taxon>
        <taxon>eudicotyledons</taxon>
        <taxon>Gunneridae</taxon>
        <taxon>Pentapetalae</taxon>
        <taxon>rosids</taxon>
        <taxon>malvids</taxon>
        <taxon>Brassicales</taxon>
        <taxon>Brassicaceae</taxon>
        <taxon>Camelineae</taxon>
        <taxon>Arabidopsis</taxon>
    </lineage>
</organism>
<sequence length="1010" mass="117086">MATSSRSERFPITPSTAATNRLTITPNSRVLKSPLTEEIMWKRLKDAGFDEQSIKNRDKAALIAYIAKLESEVYDYQHNMGLLLLEKNELSSQYEEIKASVDESDLTHMREKSAYVSALAEAKKREESLKKDVGIAKECISSLEKTLHEMRAECAETKVSAGSTMSEAHVMIEDALKKLADAEAKMRAAEALQAEANRYHRIAERKLKEVESREDDLTRRLASFKSECETKENEMVIERQTLNERRKSLQQEHERLLDAQVSLNQREDHIFARSQELAELEKGLDTAKTTFEEERKAFEDKKSNLEIALALCAKREEAVSERESSLLKKEQELLVAEEKIASKESELIQNVLANQEVILRKRKSDVEAELECKSKSVEVEIESKRRAWELREVDIKQREDLVGEKEHDLEVQSRALAEKEKDITEKSFNLDEKEKNLVATEEDINRKTTMLEDEKERLRKLDLELQQSLTSLEDKRKRVDSATQKLEALKSETSELSTLEMKLKEELDDLRAQKLEMLAEADRLKVEKAKFEAEWEHIDVKREELRKEAEYITRQREAFSMYLKDERDNIKEERDALRNQHKNDVESLNREREEFMNKMVEEHSEWLSKIQRERADFLLGIEMQKRELEYCIENKREELENSSRDREKAFEQEKKLEEERIQSLKEMAEKELEHVQVELKRLDAERLEIKLDRERREREWAELKDSVEELKVQREKLETQRHMLRAERDEIRHEIEELKKLENLKVALDDMSMAKMQLSNLERSWEKVSALKQKVVSRDDELDLQNGVSTVSNSEDGYNSSMERQNGLTPSSATPFSWIKRCTNLIFKTSPEKSTLMHHYEEEGGVPSEKLKLESSRREEKAYTEGLSIAVERLEAGRKRRGNTSGDETSEPSNNKKRKHDVTQKYSDEADTQSVISSPQNVPEDKHELPSSQTQTPSGMVVISETVKITRVTCETEVTNKVTTLDCSESPSEAGRKMGEETEDGDCNQTGINASETVIHNEAATEDICT</sequence>
<keyword id="KW-0025">Alternative splicing</keyword>
<keyword id="KW-0175">Coiled coil</keyword>
<keyword id="KW-0963">Cytoplasm</keyword>
<keyword id="KW-0472">Membrane</keyword>
<keyword id="KW-0539">Nucleus</keyword>
<keyword id="KW-1185">Reference proteome</keyword>
<keyword id="KW-0677">Repeat</keyword>
<proteinExistence type="evidence at protein level"/>
<gene>
    <name evidence="10" type="primary">CRWN4</name>
    <name evidence="9" type="synonym">LINC4</name>
    <name evidence="12" type="ordered locus">At5g65770</name>
    <name evidence="15" type="ORF">F6H11.110</name>
    <name evidence="14" type="ORF">MPA24.12</name>
</gene>
<accession>Q9FLH0</accession>
<accession>F4JXK1</accession>
<accession>O49539</accession>
<evidence type="ECO:0000250" key="1">
    <source>
        <dbReference type="UniProtKB" id="F4HRT5"/>
    </source>
</evidence>
<evidence type="ECO:0000250" key="2">
    <source>
        <dbReference type="UniProtKB" id="Q6ZWR6"/>
    </source>
</evidence>
<evidence type="ECO:0000255" key="3"/>
<evidence type="ECO:0000255" key="4">
    <source>
        <dbReference type="PROSITE-ProRule" id="PRU00768"/>
    </source>
</evidence>
<evidence type="ECO:0000256" key="5">
    <source>
        <dbReference type="SAM" id="MobiDB-lite"/>
    </source>
</evidence>
<evidence type="ECO:0000269" key="6">
    <source>
    </source>
</evidence>
<evidence type="ECO:0000269" key="7">
    <source>
    </source>
</evidence>
<evidence type="ECO:0000269" key="8">
    <source>
    </source>
</evidence>
<evidence type="ECO:0000303" key="9">
    <source>
    </source>
</evidence>
<evidence type="ECO:0000303" key="10">
    <source>
    </source>
</evidence>
<evidence type="ECO:0000305" key="11"/>
<evidence type="ECO:0000312" key="12">
    <source>
        <dbReference type="Araport" id="AT5G65770"/>
    </source>
</evidence>
<evidence type="ECO:0000312" key="13">
    <source>
        <dbReference type="EMBL" id="AED98104.1"/>
    </source>
</evidence>
<evidence type="ECO:0000312" key="14">
    <source>
        <dbReference type="EMBL" id="BAB10684.1"/>
    </source>
</evidence>
<evidence type="ECO:0000312" key="15">
    <source>
        <dbReference type="EMBL" id="CAA16682.1"/>
    </source>
</evidence>
<dbReference type="EMBL" id="AB010075">
    <property type="protein sequence ID" value="BAB10684.1"/>
    <property type="molecule type" value="Genomic_DNA"/>
</dbReference>
<dbReference type="EMBL" id="AL021684">
    <property type="protein sequence ID" value="CAA16682.1"/>
    <property type="status" value="ALT_SEQ"/>
    <property type="molecule type" value="Genomic_DNA"/>
</dbReference>
<dbReference type="EMBL" id="CP002688">
    <property type="protein sequence ID" value="AED98103.1"/>
    <property type="molecule type" value="Genomic_DNA"/>
</dbReference>
<dbReference type="EMBL" id="CP002688">
    <property type="protein sequence ID" value="AED98104.1"/>
    <property type="molecule type" value="Genomic_DNA"/>
</dbReference>
<dbReference type="EMBL" id="CP002688">
    <property type="protein sequence ID" value="AED98105.1"/>
    <property type="molecule type" value="Genomic_DNA"/>
</dbReference>
<dbReference type="RefSeq" id="NP_001154799.1">
    <molecule id="Q9FLH0-2"/>
    <property type="nucleotide sequence ID" value="NM_001161327.1"/>
</dbReference>
<dbReference type="RefSeq" id="NP_001190626.1">
    <molecule id="Q9FLH0-1"/>
    <property type="nucleotide sequence ID" value="NM_001203697.1"/>
</dbReference>
<dbReference type="RefSeq" id="NP_201378.5">
    <molecule id="Q9FLH0-1"/>
    <property type="nucleotide sequence ID" value="NM_125974.5"/>
</dbReference>
<dbReference type="SMR" id="Q9FLH0"/>
<dbReference type="BioGRID" id="21948">
    <property type="interactions" value="2"/>
</dbReference>
<dbReference type="FunCoup" id="Q9FLH0">
    <property type="interactions" value="2"/>
</dbReference>
<dbReference type="STRING" id="3702.Q9FLH0"/>
<dbReference type="iPTMnet" id="Q9FLH0"/>
<dbReference type="PaxDb" id="3702-AT5G65780.2"/>
<dbReference type="ProteomicsDB" id="220316">
    <molecule id="Q9FLH0-1"/>
</dbReference>
<dbReference type="EnsemblPlants" id="AT5G65770.1">
    <molecule id="Q9FLH0-1"/>
    <property type="protein sequence ID" value="AT5G65770.1"/>
    <property type="gene ID" value="AT5G65770"/>
</dbReference>
<dbReference type="EnsemblPlants" id="AT5G65770.2">
    <molecule id="Q9FLH0-2"/>
    <property type="protein sequence ID" value="AT5G65770.2"/>
    <property type="gene ID" value="AT5G65770"/>
</dbReference>
<dbReference type="EnsemblPlants" id="AT5G65770.3">
    <molecule id="Q9FLH0-1"/>
    <property type="protein sequence ID" value="AT5G65770.3"/>
    <property type="gene ID" value="AT5G65770"/>
</dbReference>
<dbReference type="GeneID" id="836706"/>
<dbReference type="Gramene" id="AT5G65770.1">
    <molecule id="Q9FLH0-1"/>
    <property type="protein sequence ID" value="AT5G65770.1"/>
    <property type="gene ID" value="AT5G65770"/>
</dbReference>
<dbReference type="Gramene" id="AT5G65770.2">
    <molecule id="Q9FLH0-2"/>
    <property type="protein sequence ID" value="AT5G65770.2"/>
    <property type="gene ID" value="AT5G65770"/>
</dbReference>
<dbReference type="Gramene" id="AT5G65770.3">
    <molecule id="Q9FLH0-1"/>
    <property type="protein sequence ID" value="AT5G65770.3"/>
    <property type="gene ID" value="AT5G65770"/>
</dbReference>
<dbReference type="KEGG" id="ath:AT5G65770"/>
<dbReference type="Araport" id="AT5G65770"/>
<dbReference type="TAIR" id="AT5G65770">
    <property type="gene designation" value="LINC4"/>
</dbReference>
<dbReference type="eggNOG" id="ENOG502QT60">
    <property type="taxonomic scope" value="Eukaryota"/>
</dbReference>
<dbReference type="HOGENOM" id="CLU_008819_0_0_1"/>
<dbReference type="InParanoid" id="Q9FLH0"/>
<dbReference type="OMA" id="REHKEFM"/>
<dbReference type="CD-CODE" id="4299E36E">
    <property type="entry name" value="Nucleolus"/>
</dbReference>
<dbReference type="PRO" id="PR:Q9FLH0"/>
<dbReference type="Proteomes" id="UP000006548">
    <property type="component" value="Chromosome 5"/>
</dbReference>
<dbReference type="ExpressionAtlas" id="Q9FLH0">
    <property type="expression patterns" value="baseline"/>
</dbReference>
<dbReference type="GO" id="GO:0010369">
    <property type="term" value="C:chromocenter"/>
    <property type="evidence" value="ECO:0000315"/>
    <property type="project" value="UniProtKB"/>
</dbReference>
<dbReference type="GO" id="GO:0005737">
    <property type="term" value="C:cytoplasm"/>
    <property type="evidence" value="ECO:0000314"/>
    <property type="project" value="UniProtKB"/>
</dbReference>
<dbReference type="GO" id="GO:0005652">
    <property type="term" value="C:nuclear lamina"/>
    <property type="evidence" value="ECO:0000314"/>
    <property type="project" value="TAIR"/>
</dbReference>
<dbReference type="GO" id="GO:0031965">
    <property type="term" value="C:nuclear membrane"/>
    <property type="evidence" value="ECO:0007669"/>
    <property type="project" value="UniProtKB-SubCell"/>
</dbReference>
<dbReference type="GO" id="GO:0034399">
    <property type="term" value="C:nuclear periphery"/>
    <property type="evidence" value="ECO:0000314"/>
    <property type="project" value="TAIR"/>
</dbReference>
<dbReference type="GO" id="GO:0005654">
    <property type="term" value="C:nucleoplasm"/>
    <property type="evidence" value="ECO:0007669"/>
    <property type="project" value="UniProtKB-SubCell"/>
</dbReference>
<dbReference type="GO" id="GO:0006974">
    <property type="term" value="P:DNA damage response"/>
    <property type="evidence" value="ECO:0000316"/>
    <property type="project" value="TAIR"/>
</dbReference>
<dbReference type="GO" id="GO:0006997">
    <property type="term" value="P:nucleus organization"/>
    <property type="evidence" value="ECO:0000315"/>
    <property type="project" value="UniProtKB"/>
</dbReference>
<dbReference type="GO" id="GO:0097298">
    <property type="term" value="P:regulation of nucleus size"/>
    <property type="evidence" value="ECO:0000315"/>
    <property type="project" value="UniProtKB"/>
</dbReference>
<dbReference type="InterPro" id="IPR040418">
    <property type="entry name" value="CRWN"/>
</dbReference>
<dbReference type="PANTHER" id="PTHR31908">
    <property type="entry name" value="PROTEIN CROWDED NUCLEI 4"/>
    <property type="match status" value="1"/>
</dbReference>
<dbReference type="PANTHER" id="PTHR31908:SF2">
    <property type="entry name" value="PROTEIN CROWDED NUCLEI 4"/>
    <property type="match status" value="1"/>
</dbReference>
<comment type="function">
    <text evidence="2 6 7">Component of SUN-protein-containing multivariate complexes also called LINC complexes which link the nucleoskeleton and cytoskeleton by providing versatile outer nuclear membrane attachment sites for cytoskeletal filaments (By similarity). Required for nucleus structure organization (e.g. size and shape) (PubMed:23396599, PubMed:24308514). Involved in the maintenance of interphase chromocenter integrity and organization (PubMed:24308514).</text>
</comment>
<comment type="subunit">
    <text evidence="1 8">Core component of the LINC complex which is composed of inner nuclear membrane SUN domain-containing proteins coupled to outer nuclear membrane WIP proteins, the nucleoskeletal CRWN/LINC proteins, and, possibly, KAKU4 (By similarity). Binds to KAKU4 (PubMed:24824484).</text>
</comment>
<comment type="subcellular location">
    <subcellularLocation>
        <location evidence="6">Nucleus membrane</location>
        <topology evidence="6">Peripheral membrane protein</topology>
    </subcellularLocation>
    <subcellularLocation>
        <location evidence="1">Nucleus</location>
        <location evidence="1">Nucleoplasm</location>
    </subcellularLocation>
    <subcellularLocation>
        <location evidence="6">Nucleus lamina</location>
    </subcellularLocation>
    <subcellularLocation>
        <location evidence="6">Cytoplasm</location>
    </subcellularLocation>
    <text evidence="1 6">Recruited to the nucleus envelope (NE) by SUN proteins and is immobilised therein (By similarity). Localized frequently to the nuclear periphery as punctate structures of different sizes. During prometaphase to anaphase, localized diffusely in the cytoplasm. Later assembled into punctate structures in the cytoplasm and then to the chromatin surface. Relocalized in part to the nuclear periphery during late telophase, the other part is still localized on the punctate structures (PubMed:23396599).</text>
</comment>
<comment type="alternative products">
    <event type="alternative splicing"/>
    <isoform>
        <id>Q9FLH0-1</id>
        <name>1</name>
        <sequence type="displayed"/>
    </isoform>
    <isoform>
        <id>Q9FLH0-2</id>
        <name>2</name>
        <sequence type="described" ref="VSP_057581 VSP_057582"/>
    </isoform>
    <text evidence="13">Additional isoforms seem to exist.</text>
</comment>
<comment type="tissue specificity">
    <text evidence="6">Expressed at low levels in roots, leaves, flowers and flower stalks.</text>
</comment>
<comment type="disruption phenotype">
    <text evidence="6 7">Reduced nuclear size associated with reduced chromocenter number and altered nuclear morphology. Plants lacking both CRWN1 and CRWN4 or both CRWN2 and CRWN4 exhibit slightly smaller rosettes. Plants lacking CRWN1, CRWN2 and CRWN4 or CRWN1, CRWN3 and CRWN4 are extremely stunted and set few seed.</text>
</comment>
<comment type="similarity">
    <text evidence="11">Belongs to the CRWN family.</text>
</comment>
<comment type="sequence caution" evidence="11">
    <conflict type="erroneous gene model prediction">
        <sequence resource="EMBL-CDS" id="CAA16682"/>
    </conflict>
    <text>The predicted gene has been split into 2 genes: At5g65770 and At5g65780.</text>
</comment>
<feature type="chain" id="PRO_0000096871" description="Protein CROWDED NUCLEI 4">
    <location>
        <begin position="1"/>
        <end position="1010"/>
    </location>
</feature>
<feature type="region of interest" description="Disordered" evidence="5">
    <location>
        <begin position="787"/>
        <end position="813"/>
    </location>
</feature>
<feature type="region of interest" description="Disordered" evidence="5">
    <location>
        <begin position="839"/>
        <end position="937"/>
    </location>
</feature>
<feature type="region of interest" description="Disordered" evidence="5">
    <location>
        <begin position="966"/>
        <end position="994"/>
    </location>
</feature>
<feature type="coiled-coil region" evidence="3">
    <location>
        <begin position="82"/>
        <end position="350"/>
    </location>
</feature>
<feature type="coiled-coil region" evidence="3">
    <location>
        <begin position="404"/>
        <end position="763"/>
    </location>
</feature>
<feature type="short sequence motif" description="Nuclear localization signal 1" evidence="4">
    <location>
        <begin position="445"/>
        <end position="452"/>
    </location>
</feature>
<feature type="short sequence motif" description="Nuclear localization signal 2" evidence="4">
    <location>
        <begin position="679"/>
        <end position="686"/>
    </location>
</feature>
<feature type="compositionally biased region" description="Basic and acidic residues" evidence="5">
    <location>
        <begin position="849"/>
        <end position="863"/>
    </location>
</feature>
<feature type="compositionally biased region" description="Polar residues" evidence="5">
    <location>
        <begin position="883"/>
        <end position="893"/>
    </location>
</feature>
<feature type="compositionally biased region" description="Polar residues" evidence="5">
    <location>
        <begin position="912"/>
        <end position="921"/>
    </location>
</feature>
<feature type="splice variant" id="VSP_057581" description="In isoform 2.">
    <original>E</original>
    <variation>EVCFYSHNSLLFLVLHYRSSKKFLGDKI</variation>
    <location>
        <position position="317"/>
    </location>
</feature>
<feature type="splice variant" id="VSP_057582" description="In isoform 2.">
    <original>TGINASETVIHNEAATEDICT</original>
    <variation>VVFMNSLKKNCLQTLQQMNNTLWLFL</variation>
    <location>
        <begin position="990"/>
        <end position="1010"/>
    </location>
</feature>